<sequence length="256" mass="28890">MSETIKDIKSKLQHMLSISELERSEYNNDARKGVQNAMIQRRKQLEKEQVLLDNYVKMTEFENSILAENPDALICGIDEVGRGPLAGPVVTCAVILNKNHHFTGLNDSKKLSAKQRHSIESKLLNDVYAYAYGYASVEEIDEINIYEATKLAMHRAIEGLRIKPTHLLVDAMTLDIDIPQTSLIKGDAKSVSIAAASVLAKEHRDQYMRDLGRKYPGYSFENNVGYGTQQHLDGIKKYGILNEHRKTFEPIKSLVN</sequence>
<protein>
    <recommendedName>
        <fullName evidence="1">Ribonuclease HII</fullName>
        <shortName evidence="1">RNase HII</shortName>
        <ecNumber evidence="1">3.1.26.4</ecNumber>
    </recommendedName>
</protein>
<dbReference type="EC" id="3.1.26.4" evidence="1"/>
<dbReference type="EMBL" id="AP008934">
    <property type="protein sequence ID" value="BAE18667.1"/>
    <property type="molecule type" value="Genomic_DNA"/>
</dbReference>
<dbReference type="RefSeq" id="WP_011303272.1">
    <property type="nucleotide sequence ID" value="NC_007350.1"/>
</dbReference>
<dbReference type="SMR" id="Q49X31"/>
<dbReference type="GeneID" id="3615168"/>
<dbReference type="KEGG" id="ssp:SSP1522"/>
<dbReference type="PATRIC" id="fig|342451.11.peg.1524"/>
<dbReference type="eggNOG" id="COG0164">
    <property type="taxonomic scope" value="Bacteria"/>
</dbReference>
<dbReference type="HOGENOM" id="CLU_036532_2_1_9"/>
<dbReference type="OrthoDB" id="9803420at2"/>
<dbReference type="Proteomes" id="UP000006371">
    <property type="component" value="Chromosome"/>
</dbReference>
<dbReference type="GO" id="GO:0005737">
    <property type="term" value="C:cytoplasm"/>
    <property type="evidence" value="ECO:0007669"/>
    <property type="project" value="UniProtKB-SubCell"/>
</dbReference>
<dbReference type="GO" id="GO:0032299">
    <property type="term" value="C:ribonuclease H2 complex"/>
    <property type="evidence" value="ECO:0007669"/>
    <property type="project" value="TreeGrafter"/>
</dbReference>
<dbReference type="GO" id="GO:0030145">
    <property type="term" value="F:manganese ion binding"/>
    <property type="evidence" value="ECO:0007669"/>
    <property type="project" value="UniProtKB-UniRule"/>
</dbReference>
<dbReference type="GO" id="GO:0003723">
    <property type="term" value="F:RNA binding"/>
    <property type="evidence" value="ECO:0007669"/>
    <property type="project" value="InterPro"/>
</dbReference>
<dbReference type="GO" id="GO:0004523">
    <property type="term" value="F:RNA-DNA hybrid ribonuclease activity"/>
    <property type="evidence" value="ECO:0007669"/>
    <property type="project" value="UniProtKB-UniRule"/>
</dbReference>
<dbReference type="GO" id="GO:0043137">
    <property type="term" value="P:DNA replication, removal of RNA primer"/>
    <property type="evidence" value="ECO:0007669"/>
    <property type="project" value="TreeGrafter"/>
</dbReference>
<dbReference type="GO" id="GO:0006298">
    <property type="term" value="P:mismatch repair"/>
    <property type="evidence" value="ECO:0007669"/>
    <property type="project" value="TreeGrafter"/>
</dbReference>
<dbReference type="CDD" id="cd07182">
    <property type="entry name" value="RNase_HII_bacteria_HII_like"/>
    <property type="match status" value="1"/>
</dbReference>
<dbReference type="FunFam" id="3.30.420.10:FF:000006">
    <property type="entry name" value="Ribonuclease HII"/>
    <property type="match status" value="1"/>
</dbReference>
<dbReference type="Gene3D" id="3.30.420.10">
    <property type="entry name" value="Ribonuclease H-like superfamily/Ribonuclease H"/>
    <property type="match status" value="1"/>
</dbReference>
<dbReference type="HAMAP" id="MF_00052_B">
    <property type="entry name" value="RNase_HII_B"/>
    <property type="match status" value="1"/>
</dbReference>
<dbReference type="InterPro" id="IPR022898">
    <property type="entry name" value="RNase_HII"/>
</dbReference>
<dbReference type="InterPro" id="IPR001352">
    <property type="entry name" value="RNase_HII/HIII"/>
</dbReference>
<dbReference type="InterPro" id="IPR024567">
    <property type="entry name" value="RNase_HII/HIII_dom"/>
</dbReference>
<dbReference type="InterPro" id="IPR012337">
    <property type="entry name" value="RNaseH-like_sf"/>
</dbReference>
<dbReference type="InterPro" id="IPR036397">
    <property type="entry name" value="RNaseH_sf"/>
</dbReference>
<dbReference type="NCBIfam" id="NF000594">
    <property type="entry name" value="PRK00015.1-1"/>
    <property type="match status" value="1"/>
</dbReference>
<dbReference type="NCBIfam" id="NF000595">
    <property type="entry name" value="PRK00015.1-3"/>
    <property type="match status" value="1"/>
</dbReference>
<dbReference type="PANTHER" id="PTHR10954">
    <property type="entry name" value="RIBONUCLEASE H2 SUBUNIT A"/>
    <property type="match status" value="1"/>
</dbReference>
<dbReference type="PANTHER" id="PTHR10954:SF18">
    <property type="entry name" value="RIBONUCLEASE HII"/>
    <property type="match status" value="1"/>
</dbReference>
<dbReference type="Pfam" id="PF01351">
    <property type="entry name" value="RNase_HII"/>
    <property type="match status" value="1"/>
</dbReference>
<dbReference type="SUPFAM" id="SSF53098">
    <property type="entry name" value="Ribonuclease H-like"/>
    <property type="match status" value="1"/>
</dbReference>
<dbReference type="PROSITE" id="PS51975">
    <property type="entry name" value="RNASE_H_2"/>
    <property type="match status" value="1"/>
</dbReference>
<evidence type="ECO:0000255" key="1">
    <source>
        <dbReference type="HAMAP-Rule" id="MF_00052"/>
    </source>
</evidence>
<evidence type="ECO:0000255" key="2">
    <source>
        <dbReference type="PROSITE-ProRule" id="PRU01319"/>
    </source>
</evidence>
<proteinExistence type="inferred from homology"/>
<name>RNH2_STAS1</name>
<accession>Q49X31</accession>
<feature type="chain" id="PRO_0000235771" description="Ribonuclease HII">
    <location>
        <begin position="1"/>
        <end position="256"/>
    </location>
</feature>
<feature type="domain" description="RNase H type-2" evidence="2">
    <location>
        <begin position="72"/>
        <end position="256"/>
    </location>
</feature>
<feature type="binding site" evidence="1">
    <location>
        <position position="78"/>
    </location>
    <ligand>
        <name>a divalent metal cation</name>
        <dbReference type="ChEBI" id="CHEBI:60240"/>
    </ligand>
</feature>
<feature type="binding site" evidence="1">
    <location>
        <position position="79"/>
    </location>
    <ligand>
        <name>a divalent metal cation</name>
        <dbReference type="ChEBI" id="CHEBI:60240"/>
    </ligand>
</feature>
<feature type="binding site" evidence="1">
    <location>
        <position position="170"/>
    </location>
    <ligand>
        <name>a divalent metal cation</name>
        <dbReference type="ChEBI" id="CHEBI:60240"/>
    </ligand>
</feature>
<reference key="1">
    <citation type="journal article" date="2005" name="Proc. Natl. Acad. Sci. U.S.A.">
        <title>Whole genome sequence of Staphylococcus saprophyticus reveals the pathogenesis of uncomplicated urinary tract infection.</title>
        <authorList>
            <person name="Kuroda M."/>
            <person name="Yamashita A."/>
            <person name="Hirakawa H."/>
            <person name="Kumano M."/>
            <person name="Morikawa K."/>
            <person name="Higashide M."/>
            <person name="Maruyama A."/>
            <person name="Inose Y."/>
            <person name="Matoba K."/>
            <person name="Toh H."/>
            <person name="Kuhara S."/>
            <person name="Hattori M."/>
            <person name="Ohta T."/>
        </authorList>
    </citation>
    <scope>NUCLEOTIDE SEQUENCE [LARGE SCALE GENOMIC DNA]</scope>
    <source>
        <strain>ATCC 15305 / DSM 20229 / NCIMB 8711 / NCTC 7292 / S-41</strain>
    </source>
</reference>
<gene>
    <name evidence="1" type="primary">rnhB</name>
    <name type="ordered locus">SSP1522</name>
</gene>
<comment type="function">
    <text evidence="1">Endonuclease that specifically degrades the RNA of RNA-DNA hybrids.</text>
</comment>
<comment type="catalytic activity">
    <reaction evidence="1">
        <text>Endonucleolytic cleavage to 5'-phosphomonoester.</text>
        <dbReference type="EC" id="3.1.26.4"/>
    </reaction>
</comment>
<comment type="cofactor">
    <cofactor evidence="1">
        <name>Mn(2+)</name>
        <dbReference type="ChEBI" id="CHEBI:29035"/>
    </cofactor>
    <cofactor evidence="1">
        <name>Mg(2+)</name>
        <dbReference type="ChEBI" id="CHEBI:18420"/>
    </cofactor>
    <text evidence="1">Manganese or magnesium. Binds 1 divalent metal ion per monomer in the absence of substrate. May bind a second metal ion after substrate binding.</text>
</comment>
<comment type="subcellular location">
    <subcellularLocation>
        <location evidence="1">Cytoplasm</location>
    </subcellularLocation>
</comment>
<comment type="similarity">
    <text evidence="1">Belongs to the RNase HII family.</text>
</comment>
<keyword id="KW-0963">Cytoplasm</keyword>
<keyword id="KW-0255">Endonuclease</keyword>
<keyword id="KW-0378">Hydrolase</keyword>
<keyword id="KW-0464">Manganese</keyword>
<keyword id="KW-0479">Metal-binding</keyword>
<keyword id="KW-0540">Nuclease</keyword>
<keyword id="KW-1185">Reference proteome</keyword>
<organism>
    <name type="scientific">Staphylococcus saprophyticus subsp. saprophyticus (strain ATCC 15305 / DSM 20229 / NCIMB 8711 / NCTC 7292 / S-41)</name>
    <dbReference type="NCBI Taxonomy" id="342451"/>
    <lineage>
        <taxon>Bacteria</taxon>
        <taxon>Bacillati</taxon>
        <taxon>Bacillota</taxon>
        <taxon>Bacilli</taxon>
        <taxon>Bacillales</taxon>
        <taxon>Staphylococcaceae</taxon>
        <taxon>Staphylococcus</taxon>
    </lineage>
</organism>